<gene>
    <name evidence="1" type="primary">aroA'</name>
    <name type="ordered locus">MMP0686</name>
</gene>
<keyword id="KW-0028">Amino-acid biosynthesis</keyword>
<keyword id="KW-0057">Aromatic amino acid biosynthesis</keyword>
<keyword id="KW-1185">Reference proteome</keyword>
<keyword id="KW-0704">Schiff base</keyword>
<keyword id="KW-0808">Transferase</keyword>
<protein>
    <recommendedName>
        <fullName evidence="1">2-amino-3,7-dideoxy-D-threo-hept-6-ulosonate synthase</fullName>
        <shortName evidence="1">ADH synthase</shortName>
        <shortName evidence="1">ADHS</shortName>
        <shortName evidence="1">ADTH synthase</shortName>
        <ecNumber evidence="1">2.2.1.10</ecNumber>
    </recommendedName>
</protein>
<organism>
    <name type="scientific">Methanococcus maripaludis (strain DSM 14266 / JCM 13030 / NBRC 101832 / S2 / LL)</name>
    <dbReference type="NCBI Taxonomy" id="267377"/>
    <lineage>
        <taxon>Archaea</taxon>
        <taxon>Methanobacteriati</taxon>
        <taxon>Methanobacteriota</taxon>
        <taxon>Methanomada group</taxon>
        <taxon>Methanococci</taxon>
        <taxon>Methanococcales</taxon>
        <taxon>Methanococcaceae</taxon>
        <taxon>Methanococcus</taxon>
    </lineage>
</organism>
<proteinExistence type="inferred from homology"/>
<dbReference type="EC" id="2.2.1.10" evidence="1"/>
<dbReference type="EMBL" id="BX950229">
    <property type="protein sequence ID" value="CAF30242.1"/>
    <property type="molecule type" value="Genomic_DNA"/>
</dbReference>
<dbReference type="RefSeq" id="WP_011170630.1">
    <property type="nucleotide sequence ID" value="NC_005791.1"/>
</dbReference>
<dbReference type="SMR" id="Q6LZE3"/>
<dbReference type="STRING" id="267377.MMP0686"/>
<dbReference type="EnsemblBacteria" id="CAF30242">
    <property type="protein sequence ID" value="CAF30242"/>
    <property type="gene ID" value="MMP0686"/>
</dbReference>
<dbReference type="KEGG" id="mmp:MMP0686"/>
<dbReference type="PATRIC" id="fig|267377.15.peg.703"/>
<dbReference type="eggNOG" id="arCOG04044">
    <property type="taxonomic scope" value="Archaea"/>
</dbReference>
<dbReference type="HOGENOM" id="CLU_057069_2_0_2"/>
<dbReference type="OrthoDB" id="50091at2157"/>
<dbReference type="Proteomes" id="UP000000590">
    <property type="component" value="Chromosome"/>
</dbReference>
<dbReference type="GO" id="GO:0004332">
    <property type="term" value="F:fructose-bisphosphate aldolase activity"/>
    <property type="evidence" value="ECO:0007669"/>
    <property type="project" value="InterPro"/>
</dbReference>
<dbReference type="GO" id="GO:0016836">
    <property type="term" value="F:hydro-lyase activity"/>
    <property type="evidence" value="ECO:0007669"/>
    <property type="project" value="InterPro"/>
</dbReference>
<dbReference type="GO" id="GO:0016744">
    <property type="term" value="F:transketolase or transaldolase activity"/>
    <property type="evidence" value="ECO:0007669"/>
    <property type="project" value="UniProtKB-UniRule"/>
</dbReference>
<dbReference type="GO" id="GO:0008652">
    <property type="term" value="P:amino acid biosynthetic process"/>
    <property type="evidence" value="ECO:0007669"/>
    <property type="project" value="UniProtKB-KW"/>
</dbReference>
<dbReference type="GO" id="GO:0009073">
    <property type="term" value="P:aromatic amino acid family biosynthetic process"/>
    <property type="evidence" value="ECO:0007669"/>
    <property type="project" value="UniProtKB-UniRule"/>
</dbReference>
<dbReference type="CDD" id="cd00958">
    <property type="entry name" value="DhnA"/>
    <property type="match status" value="1"/>
</dbReference>
<dbReference type="Gene3D" id="3.20.20.70">
    <property type="entry name" value="Aldolase class I"/>
    <property type="match status" value="1"/>
</dbReference>
<dbReference type="HAMAP" id="MF_00960">
    <property type="entry name" value="ADH_synthase"/>
    <property type="match status" value="1"/>
</dbReference>
<dbReference type="InterPro" id="IPR010210">
    <property type="entry name" value="ADH_synthase"/>
</dbReference>
<dbReference type="InterPro" id="IPR013785">
    <property type="entry name" value="Aldolase_TIM"/>
</dbReference>
<dbReference type="InterPro" id="IPR002915">
    <property type="entry name" value="DeoC/FbaB/LacD_aldolase"/>
</dbReference>
<dbReference type="InterPro" id="IPR050456">
    <property type="entry name" value="DeoC/FbaB_aldolase"/>
</dbReference>
<dbReference type="InterPro" id="IPR041720">
    <property type="entry name" value="FbaB-like"/>
</dbReference>
<dbReference type="NCBIfam" id="TIGR01949">
    <property type="entry name" value="ADH_synth"/>
    <property type="match status" value="1"/>
</dbReference>
<dbReference type="NCBIfam" id="NF005556">
    <property type="entry name" value="PRK07226.1"/>
    <property type="match status" value="1"/>
</dbReference>
<dbReference type="PANTHER" id="PTHR47916:SF1">
    <property type="entry name" value="3-HYDROXY-5-PHOSPHONOOXYPENTANE-2,4-DIONE THIOLASE"/>
    <property type="match status" value="1"/>
</dbReference>
<dbReference type="PANTHER" id="PTHR47916">
    <property type="entry name" value="FRUCTOSE-BISPHOSPHATE ALDOLASE CLASS 1"/>
    <property type="match status" value="1"/>
</dbReference>
<dbReference type="Pfam" id="PF01791">
    <property type="entry name" value="DeoC"/>
    <property type="match status" value="1"/>
</dbReference>
<dbReference type="PIRSF" id="PIRSF038992">
    <property type="entry name" value="Aldolase_Ia"/>
    <property type="match status" value="1"/>
</dbReference>
<dbReference type="SMART" id="SM01133">
    <property type="entry name" value="DeoC"/>
    <property type="match status" value="1"/>
</dbReference>
<dbReference type="SUPFAM" id="SSF51569">
    <property type="entry name" value="Aldolase"/>
    <property type="match status" value="1"/>
</dbReference>
<feature type="chain" id="PRO_0000363669" description="2-amino-3,7-dideoxy-D-threo-hept-6-ulosonate synthase">
    <location>
        <begin position="1"/>
        <end position="272"/>
    </location>
</feature>
<feature type="active site" description="Proton acceptor" evidence="1">
    <location>
        <position position="33"/>
    </location>
</feature>
<feature type="active site" description="Proton donor" evidence="1">
    <location>
        <position position="153"/>
    </location>
</feature>
<feature type="active site" description="Schiff-base intermediate with substrate" evidence="1">
    <location>
        <position position="184"/>
    </location>
</feature>
<feature type="binding site" evidence="1">
    <location>
        <begin position="33"/>
        <end position="37"/>
    </location>
    <ligand>
        <name>1-deoxy-D-threo-hexo-2,5-diulose 6-phosphate</name>
        <dbReference type="ChEBI" id="CHEBI:58861"/>
    </ligand>
</feature>
<feature type="binding site" evidence="1">
    <location>
        <begin position="153"/>
        <end position="155"/>
    </location>
    <ligand>
        <name>1-deoxy-D-threo-hexo-2,5-diulose 6-phosphate</name>
        <dbReference type="ChEBI" id="CHEBI:58861"/>
    </ligand>
</feature>
<feature type="binding site" evidence="1">
    <location>
        <begin position="209"/>
        <end position="210"/>
    </location>
    <ligand>
        <name>1-deoxy-D-threo-hexo-2,5-diulose 6-phosphate</name>
        <dbReference type="ChEBI" id="CHEBI:58861"/>
    </ligand>
</feature>
<feature type="binding site" evidence="1">
    <location>
        <begin position="237"/>
        <end position="238"/>
    </location>
    <ligand>
        <name>1-deoxy-D-threo-hexo-2,5-diulose 6-phosphate</name>
        <dbReference type="ChEBI" id="CHEBI:58861"/>
    </ligand>
</feature>
<name>ADHS_METMP</name>
<comment type="function">
    <text evidence="1 2 3">Catalyzes a transaldol reaction between 6-deoxy-5-ketofructose 1-phosphate (DKFP) and L-aspartate semialdehyde (ASA) with an elimination of hydroxypyruvaldehyde phosphate to yield 2-amino-3,7-dideoxy-D-threo-hept-6-ulosonate (ADH) (Probable). Plays a key role in an alternative pathway of the biosynthesis of 3-dehydroquinate (DHQ), which is involved in the canonical pathway for the biosynthesis of aromatic amino acids and which is also a precursor for the biosynthesis of p-aminobenzoic acid (PABA) in M.maripaludis. Does not possess fructose-bisphosphate (FBP) aldolase activity.</text>
</comment>
<comment type="catalytic activity">
    <reaction evidence="1">
        <text>1-deoxy-D-threo-hexo-2,5-diulose 6-phosphate + L-aspartate 4-semialdehyde = 2,3-dioxopropyl phosphate + 2-amino-2,3,7-trideoxy-D-lyxo-hept-6-ulosonate</text>
        <dbReference type="Rhea" id="RHEA:25952"/>
        <dbReference type="ChEBI" id="CHEBI:58859"/>
        <dbReference type="ChEBI" id="CHEBI:58860"/>
        <dbReference type="ChEBI" id="CHEBI:58861"/>
        <dbReference type="ChEBI" id="CHEBI:537519"/>
        <dbReference type="EC" id="2.2.1.10"/>
    </reaction>
</comment>
<comment type="subunit">
    <text evidence="1">Homodecamer.</text>
</comment>
<comment type="disruption phenotype">
    <text evidence="2">Cells lacking this gene require both aromatic amino acids (AroAAs) and p-aminobenzoic acid (PABA) for growth. In the presence of PABA and AroAAs, growth of the mutant strain laggs about 30 hours behind that of wild-type strain. By complementing the mutant strain with the expression of aroA', the strain grows in minimal medium with acetate only. Aryl acids do not replace the requirement of AroAAs for the growth of the deletion mutant strain.</text>
</comment>
<comment type="similarity">
    <text evidence="1">Belongs to the DeoC/FbaB aldolase family. ADHS subfamily.</text>
</comment>
<evidence type="ECO:0000255" key="1">
    <source>
        <dbReference type="HAMAP-Rule" id="MF_00960"/>
    </source>
</evidence>
<evidence type="ECO:0000269" key="2">
    <source>
    </source>
</evidence>
<evidence type="ECO:0000305" key="3"/>
<accession>Q6LZE3</accession>
<sequence>MEMFDNIKNVGKLIRLERIFDKKSEKTVIIPMDHGVSSGPLDGIKDMRITTNAVADGGANAVLGHKGLVRHGHRGYGRDIGLIIHMSAGTSISPDPNKKVIVTTVEDAMRMGADAVSLHVNVGAESDFEMYRDLGLISETCEHWGMPLIAMMYPRGPKIKDEKDPEVVAHAARLGAELGADIIKTNYTGDPDTFKEVVKGCPAPIVIAGGPKTNTDEEFLQMVKDAMHAGGKGVASGRNVFQHKDVKGITSAICKIVHEDVEVEEALKEIKI</sequence>
<reference key="1">
    <citation type="journal article" date="2004" name="J. Bacteriol.">
        <title>Complete genome sequence of the genetically tractable hydrogenotrophic methanogen Methanococcus maripaludis.</title>
        <authorList>
            <person name="Hendrickson E.L."/>
            <person name="Kaul R."/>
            <person name="Zhou Y."/>
            <person name="Bovee D."/>
            <person name="Chapman P."/>
            <person name="Chung J."/>
            <person name="Conway de Macario E."/>
            <person name="Dodsworth J.A."/>
            <person name="Gillett W."/>
            <person name="Graham D.E."/>
            <person name="Hackett M."/>
            <person name="Haydock A.K."/>
            <person name="Kang A."/>
            <person name="Land M.L."/>
            <person name="Levy R."/>
            <person name="Lie T.J."/>
            <person name="Major T.A."/>
            <person name="Moore B.C."/>
            <person name="Porat I."/>
            <person name="Palmeiri A."/>
            <person name="Rouse G."/>
            <person name="Saenphimmachak C."/>
            <person name="Soell D."/>
            <person name="Van Dien S."/>
            <person name="Wang T."/>
            <person name="Whitman W.B."/>
            <person name="Xia Q."/>
            <person name="Zhang Y."/>
            <person name="Larimer F.W."/>
            <person name="Olson M.V."/>
            <person name="Leigh J.A."/>
        </authorList>
    </citation>
    <scope>NUCLEOTIDE SEQUENCE [LARGE SCALE GENOMIC DNA]</scope>
    <source>
        <strain>DSM 14266 / JCM 13030 / NBRC 101832 / S2 / LL</strain>
    </source>
</reference>
<reference key="2">
    <citation type="journal article" date="2006" name="Mol. Microbiol.">
        <title>Biochemical and genetic characterization of an early step in a novel pathway for the biosynthesis of aromatic amino acids and p-aminobenzoic acid in the archaeon Methanococcus maripaludis.</title>
        <authorList>
            <person name="Porat I."/>
            <person name="Sieprawska-Lupa M."/>
            <person name="Teng Q."/>
            <person name="Bohanon F.J."/>
            <person name="White R.H."/>
            <person name="Whitman W.B."/>
        </authorList>
    </citation>
    <scope>FUNCTION</scope>
    <scope>ROLE IN DKFP PATHWAY</scope>
    <scope>GENE NAME</scope>
    <scope>PATHWAY</scope>
    <scope>DISRUPTION PHENOTYPE</scope>
    <source>
        <strain>DSM 14266 / JCM 13030 / NBRC 101832 / S2 / LL</strain>
    </source>
</reference>